<sequence>MSQSIIESKNKKDVNNGKIPAKETILSPRFYTTDFEAMENMDLSINEEELEAICEEFRKDYNRHHFVRNSEFDGAAEKLDPETRELFVDFLEGSCTSEFSGFLLYKELSRRIKDKNPLLAECFAHMARDEARHAGFLNKSMSDFGLQLDLGFLTANKDYTYFPPRSIFYATYLSEKIGYWRYIAIYRHLEKNPDSKIFPLFNYFENWCQDENRHGDFFDALMKAQPRTVKSLSQKINIGGTTFTHPLFDYFHRFRYFLNNLPITSKLWSRFFLLAVFATMYARDLGIKKDFYSSLGLDAREYDQYVINKTNETSARVFPVVLDVYDKSFYGRLDKIVENNKVLSNIANSEENKVSKTLKKLPTYLSNGYQLLRLYLLKPLDSKDFQPSIR</sequence>
<organism>
    <name type="scientific">Prochlorococcus marinus (strain MIT 9312)</name>
    <dbReference type="NCBI Taxonomy" id="74546"/>
    <lineage>
        <taxon>Bacteria</taxon>
        <taxon>Bacillati</taxon>
        <taxon>Cyanobacteriota</taxon>
        <taxon>Cyanophyceae</taxon>
        <taxon>Synechococcales</taxon>
        <taxon>Prochlorococcaceae</taxon>
        <taxon>Prochlorococcus</taxon>
    </lineage>
</organism>
<dbReference type="EC" id="1.14.13.81" evidence="1"/>
<dbReference type="EMBL" id="CP000111">
    <property type="protein sequence ID" value="ABB50016.1"/>
    <property type="molecule type" value="Genomic_DNA"/>
</dbReference>
<dbReference type="RefSeq" id="WP_011376508.1">
    <property type="nucleotide sequence ID" value="NC_007577.1"/>
</dbReference>
<dbReference type="STRING" id="74546.PMT9312_0956"/>
<dbReference type="KEGG" id="pmi:PMT9312_0956"/>
<dbReference type="eggNOG" id="COG1633">
    <property type="taxonomic scope" value="Bacteria"/>
</dbReference>
<dbReference type="HOGENOM" id="CLU_048037_0_0_3"/>
<dbReference type="OrthoDB" id="141643at2"/>
<dbReference type="UniPathway" id="UPA00670"/>
<dbReference type="Proteomes" id="UP000002715">
    <property type="component" value="Chromosome"/>
</dbReference>
<dbReference type="GO" id="GO:0005506">
    <property type="term" value="F:iron ion binding"/>
    <property type="evidence" value="ECO:0007669"/>
    <property type="project" value="UniProtKB-UniRule"/>
</dbReference>
<dbReference type="GO" id="GO:0048529">
    <property type="term" value="F:magnesium-protoporphyrin IX monomethyl ester (oxidative) cyclase activity"/>
    <property type="evidence" value="ECO:0007669"/>
    <property type="project" value="UniProtKB-UniRule"/>
</dbReference>
<dbReference type="GO" id="GO:0036068">
    <property type="term" value="P:light-independent chlorophyll biosynthetic process"/>
    <property type="evidence" value="ECO:0007669"/>
    <property type="project" value="UniProtKB-UniRule"/>
</dbReference>
<dbReference type="GO" id="GO:0015979">
    <property type="term" value="P:photosynthesis"/>
    <property type="evidence" value="ECO:0007669"/>
    <property type="project" value="UniProtKB-UniRule"/>
</dbReference>
<dbReference type="HAMAP" id="MF_01840">
    <property type="entry name" value="AcsF"/>
    <property type="match status" value="1"/>
</dbReference>
<dbReference type="InterPro" id="IPR008434">
    <property type="entry name" value="AcsF"/>
</dbReference>
<dbReference type="InterPro" id="IPR009078">
    <property type="entry name" value="Ferritin-like_SF"/>
</dbReference>
<dbReference type="InterPro" id="IPR003251">
    <property type="entry name" value="Rr_diiron-bd_dom"/>
</dbReference>
<dbReference type="NCBIfam" id="TIGR02029">
    <property type="entry name" value="AcsF"/>
    <property type="match status" value="1"/>
</dbReference>
<dbReference type="NCBIfam" id="NF010172">
    <property type="entry name" value="PRK13654.1"/>
    <property type="match status" value="1"/>
</dbReference>
<dbReference type="PANTHER" id="PTHR31053">
    <property type="entry name" value="MAGNESIUM-PROTOPORPHYRIN IX MONOMETHYL ESTER [OXIDATIVE] CYCLASE, CHLOROPLASTIC"/>
    <property type="match status" value="1"/>
</dbReference>
<dbReference type="PANTHER" id="PTHR31053:SF2">
    <property type="entry name" value="MAGNESIUM-PROTOPORPHYRIN IX MONOMETHYL ESTER [OXIDATIVE] CYCLASE, CHLOROPLASTIC"/>
    <property type="match status" value="1"/>
</dbReference>
<dbReference type="Pfam" id="PF02915">
    <property type="entry name" value="Rubrerythrin"/>
    <property type="match status" value="1"/>
</dbReference>
<dbReference type="SUPFAM" id="SSF47240">
    <property type="entry name" value="Ferritin-like"/>
    <property type="match status" value="1"/>
</dbReference>
<evidence type="ECO:0000255" key="1">
    <source>
        <dbReference type="HAMAP-Rule" id="MF_01840"/>
    </source>
</evidence>
<name>ACSF_PROM9</name>
<accession>Q31AS9</accession>
<keyword id="KW-0149">Chlorophyll biosynthesis</keyword>
<keyword id="KW-0408">Iron</keyword>
<keyword id="KW-0479">Metal-binding</keyword>
<keyword id="KW-0521">NADP</keyword>
<keyword id="KW-0560">Oxidoreductase</keyword>
<keyword id="KW-0602">Photosynthesis</keyword>
<comment type="function">
    <text evidence="1">Catalyzes the formation of the isocyclic ring in chlorophyll biosynthesis. Mediates the cyclase reaction, which results in the formation of divinylprotochlorophyllide (Pchlide) characteristic of all chlorophylls from magnesium-protoporphyrin IX 13-monomethyl ester (MgPMME).</text>
</comment>
<comment type="catalytic activity">
    <reaction evidence="1">
        <text>Mg-protoporphyrin IX 13-monomethyl ester + 3 NADPH + 3 O2 + 2 H(+) = 3,8-divinyl protochlorophyllide a + 3 NADP(+) + 5 H2O</text>
        <dbReference type="Rhea" id="RHEA:33235"/>
        <dbReference type="ChEBI" id="CHEBI:15377"/>
        <dbReference type="ChEBI" id="CHEBI:15378"/>
        <dbReference type="ChEBI" id="CHEBI:15379"/>
        <dbReference type="ChEBI" id="CHEBI:57783"/>
        <dbReference type="ChEBI" id="CHEBI:58349"/>
        <dbReference type="ChEBI" id="CHEBI:58632"/>
        <dbReference type="ChEBI" id="CHEBI:60491"/>
        <dbReference type="EC" id="1.14.13.81"/>
    </reaction>
</comment>
<comment type="cofactor">
    <cofactor evidence="1">
        <name>Fe cation</name>
        <dbReference type="ChEBI" id="CHEBI:24875"/>
    </cofactor>
</comment>
<comment type="pathway">
    <text evidence="1">Porphyrin-containing compound metabolism; chlorophyll biosynthesis (light-independent).</text>
</comment>
<comment type="similarity">
    <text evidence="1">Belongs to the AcsF family.</text>
</comment>
<gene>
    <name evidence="1" type="primary">acsF</name>
    <name type="ordered locus">PMT9312_0956</name>
</gene>
<feature type="chain" id="PRO_1000070548" description="Magnesium-protoporphyrin IX monomethyl ester [oxidative] cyclase">
    <location>
        <begin position="1"/>
        <end position="390"/>
    </location>
</feature>
<proteinExistence type="inferred from homology"/>
<reference key="1">
    <citation type="journal article" date="2006" name="Science">
        <title>Genomic islands and the ecology and evolution of Prochlorococcus.</title>
        <authorList>
            <person name="Coleman M.L."/>
            <person name="Sullivan M.B."/>
            <person name="Martiny A.C."/>
            <person name="Steglich C."/>
            <person name="Barry K."/>
            <person name="Delong E.F."/>
            <person name="Chisholm S.W."/>
        </authorList>
    </citation>
    <scope>NUCLEOTIDE SEQUENCE [LARGE SCALE GENOMIC DNA]</scope>
    <source>
        <strain>MIT 9312</strain>
    </source>
</reference>
<protein>
    <recommendedName>
        <fullName evidence="1">Magnesium-protoporphyrin IX monomethyl ester [oxidative] cyclase</fullName>
        <shortName evidence="1">Mg-protoporphyrin IX monomethyl ester oxidative cyclase</shortName>
        <ecNumber evidence="1">1.14.13.81</ecNumber>
    </recommendedName>
</protein>